<accession>P0C5N1</accession>
<gene>
    <name type="ordered locus">YGL014C-A</name>
</gene>
<proteinExistence type="evidence at protein level"/>
<name>YG014_YEAST</name>
<organism>
    <name type="scientific">Saccharomyces cerevisiae (strain ATCC 204508 / S288c)</name>
    <name type="common">Baker's yeast</name>
    <dbReference type="NCBI Taxonomy" id="559292"/>
    <lineage>
        <taxon>Eukaryota</taxon>
        <taxon>Fungi</taxon>
        <taxon>Dikarya</taxon>
        <taxon>Ascomycota</taxon>
        <taxon>Saccharomycotina</taxon>
        <taxon>Saccharomycetes</taxon>
        <taxon>Saccharomycetales</taxon>
        <taxon>Saccharomycetaceae</taxon>
        <taxon>Saccharomyces</taxon>
    </lineage>
</organism>
<sequence length="53" mass="6603">MRNLHHLRVGHEAHSTHHLWMWKHLRRRAISELRILRNFIRKCIRGGVFLWII</sequence>
<keyword id="KW-1185">Reference proteome</keyword>
<feature type="chain" id="PRO_0000309029" description="Uncharacterized protein YGL014C-A">
    <location>
        <begin position="1"/>
        <end position="53"/>
    </location>
</feature>
<protein>
    <recommendedName>
        <fullName>Uncharacterized protein YGL014C-A</fullName>
    </recommendedName>
</protein>
<dbReference type="EMBL" id="Z72536">
    <property type="status" value="NOT_ANNOTATED_CDS"/>
    <property type="molecule type" value="Genomic_DNA"/>
</dbReference>
<dbReference type="EMBL" id="BK006941">
    <property type="status" value="NOT_ANNOTATED_CDS"/>
    <property type="molecule type" value="Genomic_DNA"/>
</dbReference>
<dbReference type="STRING" id="4932.YGL014C-A"/>
<dbReference type="PaxDb" id="4932-YGL014C-A"/>
<dbReference type="EnsemblFungi" id="YGL014C-A_mRNA">
    <property type="protein sequence ID" value="YGL014C-A"/>
    <property type="gene ID" value="YGL014C-A"/>
</dbReference>
<dbReference type="AGR" id="SGD:S000028825"/>
<dbReference type="SGD" id="S000028825">
    <property type="gene designation" value="YGL014C-A"/>
</dbReference>
<dbReference type="HOGENOM" id="CLU_3070473_0_0_1"/>
<dbReference type="InParanoid" id="P0C5N1"/>
<dbReference type="PRO" id="PR:P0C5N1"/>
<dbReference type="Proteomes" id="UP000002311">
    <property type="component" value="Chromosome VII"/>
</dbReference>
<dbReference type="RNAct" id="P0C5N1">
    <property type="molecule type" value="protein"/>
</dbReference>
<reference key="1">
    <citation type="journal article" date="1997" name="Nature">
        <title>The nucleotide sequence of Saccharomyces cerevisiae chromosome VII.</title>
        <authorList>
            <person name="Tettelin H."/>
            <person name="Agostoni-Carbone M.L."/>
            <person name="Albermann K."/>
            <person name="Albers M."/>
            <person name="Arroyo J."/>
            <person name="Backes U."/>
            <person name="Barreiros T."/>
            <person name="Bertani I."/>
            <person name="Bjourson A.J."/>
            <person name="Brueckner M."/>
            <person name="Bruschi C.V."/>
            <person name="Carignani G."/>
            <person name="Castagnoli L."/>
            <person name="Cerdan E."/>
            <person name="Clemente M.L."/>
            <person name="Coblenz A."/>
            <person name="Coglievina M."/>
            <person name="Coissac E."/>
            <person name="Defoor E."/>
            <person name="Del Bino S."/>
            <person name="Delius H."/>
            <person name="Delneri D."/>
            <person name="de Wergifosse P."/>
            <person name="Dujon B."/>
            <person name="Durand P."/>
            <person name="Entian K.-D."/>
            <person name="Eraso P."/>
            <person name="Escribano V."/>
            <person name="Fabiani L."/>
            <person name="Fartmann B."/>
            <person name="Feroli F."/>
            <person name="Feuermann M."/>
            <person name="Frontali L."/>
            <person name="Garcia-Gonzalez M."/>
            <person name="Garcia-Saez M.I."/>
            <person name="Goffeau A."/>
            <person name="Guerreiro P."/>
            <person name="Hani J."/>
            <person name="Hansen M."/>
            <person name="Hebling U."/>
            <person name="Hernandez K."/>
            <person name="Heumann K."/>
            <person name="Hilger F."/>
            <person name="Hofmann B."/>
            <person name="Indge K.J."/>
            <person name="James C.M."/>
            <person name="Klima R."/>
            <person name="Koetter P."/>
            <person name="Kramer B."/>
            <person name="Kramer W."/>
            <person name="Lauquin G."/>
            <person name="Leuther H."/>
            <person name="Louis E.J."/>
            <person name="Maillier E."/>
            <person name="Marconi A."/>
            <person name="Martegani E."/>
            <person name="Mazon M.J."/>
            <person name="Mazzoni C."/>
            <person name="McReynolds A.D.K."/>
            <person name="Melchioretto P."/>
            <person name="Mewes H.-W."/>
            <person name="Minenkova O."/>
            <person name="Mueller-Auer S."/>
            <person name="Nawrocki A."/>
            <person name="Netter P."/>
            <person name="Neu R."/>
            <person name="Nombela C."/>
            <person name="Oliver S.G."/>
            <person name="Panzeri L."/>
            <person name="Paoluzi S."/>
            <person name="Plevani P."/>
            <person name="Portetelle D."/>
            <person name="Portillo F."/>
            <person name="Potier S."/>
            <person name="Purnelle B."/>
            <person name="Rieger M."/>
            <person name="Riles L."/>
            <person name="Rinaldi T."/>
            <person name="Robben J."/>
            <person name="Rodrigues-Pousada C."/>
            <person name="Rodriguez-Belmonte E."/>
            <person name="Rodriguez-Torres A.M."/>
            <person name="Rose M."/>
            <person name="Ruzzi M."/>
            <person name="Saliola M."/>
            <person name="Sanchez-Perez M."/>
            <person name="Schaefer B."/>
            <person name="Schaefer M."/>
            <person name="Scharfe M."/>
            <person name="Schmidheini T."/>
            <person name="Schreer A."/>
            <person name="Skala J."/>
            <person name="Souciet J.-L."/>
            <person name="Steensma H.Y."/>
            <person name="Talla E."/>
            <person name="Thierry A."/>
            <person name="Vandenbol M."/>
            <person name="van der Aart Q.J.M."/>
            <person name="Van Dyck L."/>
            <person name="Vanoni M."/>
            <person name="Verhasselt P."/>
            <person name="Voet M."/>
            <person name="Volckaert G."/>
            <person name="Wambutt R."/>
            <person name="Watson M.D."/>
            <person name="Weber N."/>
            <person name="Wedler E."/>
            <person name="Wedler H."/>
            <person name="Wipfli P."/>
            <person name="Wolf K."/>
            <person name="Wright L.F."/>
            <person name="Zaccaria P."/>
            <person name="Zimmermann M."/>
            <person name="Zollner A."/>
            <person name="Kleine K."/>
        </authorList>
    </citation>
    <scope>NUCLEOTIDE SEQUENCE [LARGE SCALE GENOMIC DNA]</scope>
    <source>
        <strain>ATCC 204508 / S288c</strain>
    </source>
</reference>
<reference key="2">
    <citation type="journal article" date="2014" name="G3 (Bethesda)">
        <title>The reference genome sequence of Saccharomyces cerevisiae: Then and now.</title>
        <authorList>
            <person name="Engel S.R."/>
            <person name="Dietrich F.S."/>
            <person name="Fisk D.G."/>
            <person name="Binkley G."/>
            <person name="Balakrishnan R."/>
            <person name="Costanzo M.C."/>
            <person name="Dwight S.S."/>
            <person name="Hitz B.C."/>
            <person name="Karra K."/>
            <person name="Nash R.S."/>
            <person name="Weng S."/>
            <person name="Wong E.D."/>
            <person name="Lloyd P."/>
            <person name="Skrzypek M.S."/>
            <person name="Miyasato S.R."/>
            <person name="Simison M."/>
            <person name="Cherry J.M."/>
        </authorList>
    </citation>
    <scope>GENOME REANNOTATION</scope>
    <source>
        <strain>ATCC 204508 / S288c</strain>
    </source>
</reference>
<reference key="3">
    <citation type="journal article" date="2002" name="Genome Res.">
        <title>Parallel identification of new genes in Saccharomyces cerevisiae.</title>
        <authorList>
            <person name="Oshiro G."/>
            <person name="Wodicka L.M."/>
            <person name="Washburn M.P."/>
            <person name="Yates J.R. III"/>
            <person name="Lockhart D.J."/>
            <person name="Winzeler E.A."/>
        </authorList>
    </citation>
    <scope>IDENTIFICATION BY MASS SPECTROMETRY</scope>
</reference>